<name>DEOB_ENT38</name>
<sequence>MKRAFIMVLDSFGIGATEDADRFGDVGSDTMGHIAEACAKGEADIGRQGPLNLPNLTRLGLVKAHEGSTGKVAAGMDANAEVVGAYAWAHELSSGKDTPSGHWEIAGVPVLFDWGYFSDHENSFPQKLLDKLVERGNLPGYLGNCHSSGTVILDQLGEEHMKTGKPIFYTSADSVFQIACHEETFGLDRLYELCEIAREELTEGGYNIGRVIARPFIGNKPGEFQRTGNRHDLAVEPPAATVLQKLVDEKDGQVVSVGKIADIYANCGITKKVKATGLDALFDATVKEMKEAGDKTIVFTNFVDFDSSWGHRRDIAGYAAGLELFDRRLPELMELVGEDDILILTADHGCDPSWTGTDHTREHIPVLVYGPKVKPGSLGHRETFADIGQTIASYFGTSPMDYGKNML</sequence>
<keyword id="KW-0963">Cytoplasm</keyword>
<keyword id="KW-0413">Isomerase</keyword>
<keyword id="KW-0464">Manganese</keyword>
<keyword id="KW-0479">Metal-binding</keyword>
<dbReference type="EC" id="5.4.2.7" evidence="1"/>
<dbReference type="EMBL" id="CP000653">
    <property type="protein sequence ID" value="ABP59230.1"/>
    <property type="molecule type" value="Genomic_DNA"/>
</dbReference>
<dbReference type="RefSeq" id="WP_012015953.1">
    <property type="nucleotide sequence ID" value="NC_009436.1"/>
</dbReference>
<dbReference type="SMR" id="A4W6A0"/>
<dbReference type="STRING" id="399742.Ent638_0543"/>
<dbReference type="KEGG" id="ent:Ent638_0543"/>
<dbReference type="eggNOG" id="COG1015">
    <property type="taxonomic scope" value="Bacteria"/>
</dbReference>
<dbReference type="HOGENOM" id="CLU_053861_0_0_6"/>
<dbReference type="OrthoDB" id="9769930at2"/>
<dbReference type="UniPathway" id="UPA00002">
    <property type="reaction ID" value="UER00467"/>
</dbReference>
<dbReference type="Proteomes" id="UP000000230">
    <property type="component" value="Chromosome"/>
</dbReference>
<dbReference type="GO" id="GO:0005829">
    <property type="term" value="C:cytosol"/>
    <property type="evidence" value="ECO:0007669"/>
    <property type="project" value="TreeGrafter"/>
</dbReference>
<dbReference type="GO" id="GO:0000287">
    <property type="term" value="F:magnesium ion binding"/>
    <property type="evidence" value="ECO:0007669"/>
    <property type="project" value="InterPro"/>
</dbReference>
<dbReference type="GO" id="GO:0030145">
    <property type="term" value="F:manganese ion binding"/>
    <property type="evidence" value="ECO:0007669"/>
    <property type="project" value="UniProtKB-UniRule"/>
</dbReference>
<dbReference type="GO" id="GO:0008973">
    <property type="term" value="F:phosphopentomutase activity"/>
    <property type="evidence" value="ECO:0007669"/>
    <property type="project" value="UniProtKB-UniRule"/>
</dbReference>
<dbReference type="GO" id="GO:0006018">
    <property type="term" value="P:2-deoxyribose 1-phosphate catabolic process"/>
    <property type="evidence" value="ECO:0007669"/>
    <property type="project" value="UniProtKB-UniRule"/>
</dbReference>
<dbReference type="GO" id="GO:0006015">
    <property type="term" value="P:5-phosphoribose 1-diphosphate biosynthetic process"/>
    <property type="evidence" value="ECO:0007669"/>
    <property type="project" value="UniProtKB-UniPathway"/>
</dbReference>
<dbReference type="GO" id="GO:0043094">
    <property type="term" value="P:metabolic compound salvage"/>
    <property type="evidence" value="ECO:0007669"/>
    <property type="project" value="InterPro"/>
</dbReference>
<dbReference type="GO" id="GO:0009117">
    <property type="term" value="P:nucleotide metabolic process"/>
    <property type="evidence" value="ECO:0007669"/>
    <property type="project" value="InterPro"/>
</dbReference>
<dbReference type="CDD" id="cd16009">
    <property type="entry name" value="PPM"/>
    <property type="match status" value="1"/>
</dbReference>
<dbReference type="FunFam" id="3.30.70.1250:FF:000001">
    <property type="entry name" value="Phosphopentomutase"/>
    <property type="match status" value="1"/>
</dbReference>
<dbReference type="Gene3D" id="3.40.720.10">
    <property type="entry name" value="Alkaline Phosphatase, subunit A"/>
    <property type="match status" value="1"/>
</dbReference>
<dbReference type="Gene3D" id="3.30.70.1250">
    <property type="entry name" value="Phosphopentomutase"/>
    <property type="match status" value="1"/>
</dbReference>
<dbReference type="HAMAP" id="MF_00740">
    <property type="entry name" value="Phosphopentomut"/>
    <property type="match status" value="1"/>
</dbReference>
<dbReference type="InterPro" id="IPR017850">
    <property type="entry name" value="Alkaline_phosphatase_core_sf"/>
</dbReference>
<dbReference type="InterPro" id="IPR010045">
    <property type="entry name" value="DeoB"/>
</dbReference>
<dbReference type="InterPro" id="IPR006124">
    <property type="entry name" value="Metalloenzyme"/>
</dbReference>
<dbReference type="InterPro" id="IPR024052">
    <property type="entry name" value="Phosphopentomutase_DeoB_cap_sf"/>
</dbReference>
<dbReference type="NCBIfam" id="TIGR01696">
    <property type="entry name" value="deoB"/>
    <property type="match status" value="1"/>
</dbReference>
<dbReference type="NCBIfam" id="NF003766">
    <property type="entry name" value="PRK05362.1"/>
    <property type="match status" value="1"/>
</dbReference>
<dbReference type="PANTHER" id="PTHR21110">
    <property type="entry name" value="PHOSPHOPENTOMUTASE"/>
    <property type="match status" value="1"/>
</dbReference>
<dbReference type="PANTHER" id="PTHR21110:SF0">
    <property type="entry name" value="PHOSPHOPENTOMUTASE"/>
    <property type="match status" value="1"/>
</dbReference>
<dbReference type="Pfam" id="PF01676">
    <property type="entry name" value="Metalloenzyme"/>
    <property type="match status" value="1"/>
</dbReference>
<dbReference type="PIRSF" id="PIRSF001491">
    <property type="entry name" value="Ppentomutase"/>
    <property type="match status" value="1"/>
</dbReference>
<dbReference type="SUPFAM" id="SSF53649">
    <property type="entry name" value="Alkaline phosphatase-like"/>
    <property type="match status" value="1"/>
</dbReference>
<dbReference type="SUPFAM" id="SSF143856">
    <property type="entry name" value="DeoB insert domain-like"/>
    <property type="match status" value="1"/>
</dbReference>
<organism>
    <name type="scientific">Enterobacter sp. (strain 638)</name>
    <dbReference type="NCBI Taxonomy" id="399742"/>
    <lineage>
        <taxon>Bacteria</taxon>
        <taxon>Pseudomonadati</taxon>
        <taxon>Pseudomonadota</taxon>
        <taxon>Gammaproteobacteria</taxon>
        <taxon>Enterobacterales</taxon>
        <taxon>Enterobacteriaceae</taxon>
        <taxon>Enterobacter</taxon>
    </lineage>
</organism>
<gene>
    <name evidence="1" type="primary">deoB</name>
    <name type="ordered locus">Ent638_0543</name>
</gene>
<proteinExistence type="inferred from homology"/>
<protein>
    <recommendedName>
        <fullName evidence="1">Phosphopentomutase</fullName>
        <ecNumber evidence="1">5.4.2.7</ecNumber>
    </recommendedName>
    <alternativeName>
        <fullName evidence="1">Phosphodeoxyribomutase</fullName>
    </alternativeName>
</protein>
<accession>A4W6A0</accession>
<comment type="function">
    <text evidence="1">Isomerase that catalyzes the conversion of deoxy-ribose 1-phosphate (dRib-1-P) and ribose 1-phosphate (Rib-1-P) to deoxy-ribose 5-phosphate (dRib-5-P) and ribose 5-phosphate (Rib-5-P), respectively.</text>
</comment>
<comment type="catalytic activity">
    <reaction evidence="1">
        <text>2-deoxy-alpha-D-ribose 1-phosphate = 2-deoxy-D-ribose 5-phosphate</text>
        <dbReference type="Rhea" id="RHEA:27658"/>
        <dbReference type="ChEBI" id="CHEBI:57259"/>
        <dbReference type="ChEBI" id="CHEBI:62877"/>
        <dbReference type="EC" id="5.4.2.7"/>
    </reaction>
</comment>
<comment type="catalytic activity">
    <reaction evidence="1">
        <text>alpha-D-ribose 1-phosphate = D-ribose 5-phosphate</text>
        <dbReference type="Rhea" id="RHEA:18793"/>
        <dbReference type="ChEBI" id="CHEBI:57720"/>
        <dbReference type="ChEBI" id="CHEBI:78346"/>
        <dbReference type="EC" id="5.4.2.7"/>
    </reaction>
</comment>
<comment type="cofactor">
    <cofactor evidence="1">
        <name>Mn(2+)</name>
        <dbReference type="ChEBI" id="CHEBI:29035"/>
    </cofactor>
    <text evidence="1">Binds 2 manganese ions.</text>
</comment>
<comment type="pathway">
    <text evidence="1">Carbohydrate degradation; 2-deoxy-D-ribose 1-phosphate degradation; D-glyceraldehyde 3-phosphate and acetaldehyde from 2-deoxy-alpha-D-ribose 1-phosphate: step 1/2.</text>
</comment>
<comment type="subcellular location">
    <subcellularLocation>
        <location evidence="1">Cytoplasm</location>
    </subcellularLocation>
</comment>
<comment type="similarity">
    <text evidence="1">Belongs to the phosphopentomutase family.</text>
</comment>
<reference key="1">
    <citation type="journal article" date="2010" name="PLoS Genet.">
        <title>Genome sequence of the plant growth promoting endophytic bacterium Enterobacter sp. 638.</title>
        <authorList>
            <person name="Taghavi S."/>
            <person name="van der Lelie D."/>
            <person name="Hoffman A."/>
            <person name="Zhang Y.B."/>
            <person name="Walla M.D."/>
            <person name="Vangronsveld J."/>
            <person name="Newman L."/>
            <person name="Monchy S."/>
        </authorList>
    </citation>
    <scope>NUCLEOTIDE SEQUENCE [LARGE SCALE GENOMIC DNA]</scope>
    <source>
        <strain>638</strain>
    </source>
</reference>
<feature type="chain" id="PRO_1000062150" description="Phosphopentomutase">
    <location>
        <begin position="1"/>
        <end position="407"/>
    </location>
</feature>
<feature type="binding site" evidence="1">
    <location>
        <position position="10"/>
    </location>
    <ligand>
        <name>Mn(2+)</name>
        <dbReference type="ChEBI" id="CHEBI:29035"/>
        <label>1</label>
    </ligand>
</feature>
<feature type="binding site" evidence="1">
    <location>
        <position position="306"/>
    </location>
    <ligand>
        <name>Mn(2+)</name>
        <dbReference type="ChEBI" id="CHEBI:29035"/>
        <label>2</label>
    </ligand>
</feature>
<feature type="binding site" evidence="1">
    <location>
        <position position="311"/>
    </location>
    <ligand>
        <name>Mn(2+)</name>
        <dbReference type="ChEBI" id="CHEBI:29035"/>
        <label>2</label>
    </ligand>
</feature>
<feature type="binding site" evidence="1">
    <location>
        <position position="347"/>
    </location>
    <ligand>
        <name>Mn(2+)</name>
        <dbReference type="ChEBI" id="CHEBI:29035"/>
        <label>1</label>
    </ligand>
</feature>
<feature type="binding site" evidence="1">
    <location>
        <position position="348"/>
    </location>
    <ligand>
        <name>Mn(2+)</name>
        <dbReference type="ChEBI" id="CHEBI:29035"/>
        <label>1</label>
    </ligand>
</feature>
<feature type="binding site" evidence="1">
    <location>
        <position position="359"/>
    </location>
    <ligand>
        <name>Mn(2+)</name>
        <dbReference type="ChEBI" id="CHEBI:29035"/>
        <label>2</label>
    </ligand>
</feature>
<evidence type="ECO:0000255" key="1">
    <source>
        <dbReference type="HAMAP-Rule" id="MF_00740"/>
    </source>
</evidence>